<accession>C6E2G6</accession>
<reference key="1">
    <citation type="submission" date="2009-07" db="EMBL/GenBank/DDBJ databases">
        <title>Complete sequence of Geobacter sp. M21.</title>
        <authorList>
            <consortium name="US DOE Joint Genome Institute"/>
            <person name="Lucas S."/>
            <person name="Copeland A."/>
            <person name="Lapidus A."/>
            <person name="Glavina del Rio T."/>
            <person name="Dalin E."/>
            <person name="Tice H."/>
            <person name="Bruce D."/>
            <person name="Goodwin L."/>
            <person name="Pitluck S."/>
            <person name="Saunders E."/>
            <person name="Brettin T."/>
            <person name="Detter J.C."/>
            <person name="Han C."/>
            <person name="Larimer F."/>
            <person name="Land M."/>
            <person name="Hauser L."/>
            <person name="Kyrpides N."/>
            <person name="Ovchinnikova G."/>
            <person name="Lovley D."/>
        </authorList>
    </citation>
    <scope>NUCLEOTIDE SEQUENCE [LARGE SCALE GENOMIC DNA]</scope>
    <source>
        <strain>M21</strain>
    </source>
</reference>
<name>RPOZ_GEOSM</name>
<organism>
    <name type="scientific">Geobacter sp. (strain M21)</name>
    <dbReference type="NCBI Taxonomy" id="443144"/>
    <lineage>
        <taxon>Bacteria</taxon>
        <taxon>Pseudomonadati</taxon>
        <taxon>Thermodesulfobacteriota</taxon>
        <taxon>Desulfuromonadia</taxon>
        <taxon>Geobacterales</taxon>
        <taxon>Geobacteraceae</taxon>
        <taxon>Geobacter</taxon>
    </lineage>
</organism>
<gene>
    <name evidence="1" type="primary">rpoZ</name>
    <name type="ordered locus">GM21_1051</name>
</gene>
<evidence type="ECO:0000255" key="1">
    <source>
        <dbReference type="HAMAP-Rule" id="MF_00366"/>
    </source>
</evidence>
<feature type="chain" id="PRO_1000205519" description="DNA-directed RNA polymerase subunit omega">
    <location>
        <begin position="1"/>
        <end position="68"/>
    </location>
</feature>
<protein>
    <recommendedName>
        <fullName evidence="1">DNA-directed RNA polymerase subunit omega</fullName>
        <shortName evidence="1">RNAP omega subunit</shortName>
        <ecNumber evidence="1">2.7.7.6</ecNumber>
    </recommendedName>
    <alternativeName>
        <fullName evidence="1">RNA polymerase omega subunit</fullName>
    </alternativeName>
    <alternativeName>
        <fullName evidence="1">Transcriptase subunit omega</fullName>
    </alternativeName>
</protein>
<sequence>MARVTVEDCLEKVDNRFLLVMLSSKRVKQLFKGARPLIDNRGANKNVVVSLREIAAGKIGCEIGKKGR</sequence>
<dbReference type="EC" id="2.7.7.6" evidence="1"/>
<dbReference type="EMBL" id="CP001661">
    <property type="protein sequence ID" value="ACT17112.1"/>
    <property type="molecule type" value="Genomic_DNA"/>
</dbReference>
<dbReference type="SMR" id="C6E2G6"/>
<dbReference type="STRING" id="443144.GM21_1051"/>
<dbReference type="KEGG" id="gem:GM21_1051"/>
<dbReference type="eggNOG" id="COG1758">
    <property type="taxonomic scope" value="Bacteria"/>
</dbReference>
<dbReference type="HOGENOM" id="CLU_125406_5_1_7"/>
<dbReference type="OrthoDB" id="9796300at2"/>
<dbReference type="GO" id="GO:0000428">
    <property type="term" value="C:DNA-directed RNA polymerase complex"/>
    <property type="evidence" value="ECO:0007669"/>
    <property type="project" value="UniProtKB-KW"/>
</dbReference>
<dbReference type="GO" id="GO:0003677">
    <property type="term" value="F:DNA binding"/>
    <property type="evidence" value="ECO:0007669"/>
    <property type="project" value="UniProtKB-UniRule"/>
</dbReference>
<dbReference type="GO" id="GO:0003899">
    <property type="term" value="F:DNA-directed RNA polymerase activity"/>
    <property type="evidence" value="ECO:0007669"/>
    <property type="project" value="UniProtKB-UniRule"/>
</dbReference>
<dbReference type="GO" id="GO:0006351">
    <property type="term" value="P:DNA-templated transcription"/>
    <property type="evidence" value="ECO:0007669"/>
    <property type="project" value="UniProtKB-UniRule"/>
</dbReference>
<dbReference type="Gene3D" id="3.90.940.10">
    <property type="match status" value="1"/>
</dbReference>
<dbReference type="HAMAP" id="MF_00366">
    <property type="entry name" value="RNApol_bact_RpoZ"/>
    <property type="match status" value="1"/>
</dbReference>
<dbReference type="InterPro" id="IPR003716">
    <property type="entry name" value="DNA-dir_RNA_pol_omega"/>
</dbReference>
<dbReference type="InterPro" id="IPR006110">
    <property type="entry name" value="Pol_omega/Rpo6/RPB6"/>
</dbReference>
<dbReference type="InterPro" id="IPR036161">
    <property type="entry name" value="RPB6/omega-like_sf"/>
</dbReference>
<dbReference type="NCBIfam" id="TIGR00690">
    <property type="entry name" value="rpoZ"/>
    <property type="match status" value="1"/>
</dbReference>
<dbReference type="PANTHER" id="PTHR34476">
    <property type="entry name" value="DNA-DIRECTED RNA POLYMERASE SUBUNIT OMEGA"/>
    <property type="match status" value="1"/>
</dbReference>
<dbReference type="PANTHER" id="PTHR34476:SF1">
    <property type="entry name" value="DNA-DIRECTED RNA POLYMERASE SUBUNIT OMEGA"/>
    <property type="match status" value="1"/>
</dbReference>
<dbReference type="Pfam" id="PF01192">
    <property type="entry name" value="RNA_pol_Rpb6"/>
    <property type="match status" value="1"/>
</dbReference>
<dbReference type="SMART" id="SM01409">
    <property type="entry name" value="RNA_pol_Rpb6"/>
    <property type="match status" value="1"/>
</dbReference>
<dbReference type="SUPFAM" id="SSF63562">
    <property type="entry name" value="RPB6/omega subunit-like"/>
    <property type="match status" value="1"/>
</dbReference>
<keyword id="KW-0240">DNA-directed RNA polymerase</keyword>
<keyword id="KW-0548">Nucleotidyltransferase</keyword>
<keyword id="KW-0804">Transcription</keyword>
<keyword id="KW-0808">Transferase</keyword>
<comment type="function">
    <text evidence="1">Promotes RNA polymerase assembly. Latches the N- and C-terminal regions of the beta' subunit thereby facilitating its interaction with the beta and alpha subunits.</text>
</comment>
<comment type="catalytic activity">
    <reaction evidence="1">
        <text>RNA(n) + a ribonucleoside 5'-triphosphate = RNA(n+1) + diphosphate</text>
        <dbReference type="Rhea" id="RHEA:21248"/>
        <dbReference type="Rhea" id="RHEA-COMP:14527"/>
        <dbReference type="Rhea" id="RHEA-COMP:17342"/>
        <dbReference type="ChEBI" id="CHEBI:33019"/>
        <dbReference type="ChEBI" id="CHEBI:61557"/>
        <dbReference type="ChEBI" id="CHEBI:140395"/>
        <dbReference type="EC" id="2.7.7.6"/>
    </reaction>
</comment>
<comment type="subunit">
    <text evidence="1">The RNAP catalytic core consists of 2 alpha, 1 beta, 1 beta' and 1 omega subunit. When a sigma factor is associated with the core the holoenzyme is formed, which can initiate transcription.</text>
</comment>
<comment type="similarity">
    <text evidence="1">Belongs to the RNA polymerase subunit omega family.</text>
</comment>
<proteinExistence type="inferred from homology"/>